<organism>
    <name type="scientific">Phyllomedusa bicolor</name>
    <name type="common">Two-colored leaf frog</name>
    <name type="synonym">Rana bicolor</name>
    <dbReference type="NCBI Taxonomy" id="8393"/>
    <lineage>
        <taxon>Eukaryota</taxon>
        <taxon>Metazoa</taxon>
        <taxon>Chordata</taxon>
        <taxon>Craniata</taxon>
        <taxon>Vertebrata</taxon>
        <taxon>Euteleostomi</taxon>
        <taxon>Amphibia</taxon>
        <taxon>Batrachia</taxon>
        <taxon>Anura</taxon>
        <taxon>Neobatrachia</taxon>
        <taxon>Hyloidea</taxon>
        <taxon>Hylidae</taxon>
        <taxon>Phyllomedusinae</taxon>
        <taxon>Phyllomedusa</taxon>
    </lineage>
</organism>
<feature type="signal peptide" evidence="2">
    <location>
        <begin position="1"/>
        <end position="25"/>
    </location>
</feature>
<feature type="propeptide" id="PRO_0000004080" description="Removed in mature form by a carboxypeptidase" evidence="3">
    <location>
        <begin position="26"/>
        <end position="69"/>
    </location>
</feature>
<feature type="chain" id="PRO_0000004081" description="Skin calcitonin gene-related peptide">
    <location>
        <begin position="70"/>
        <end position="106"/>
    </location>
</feature>
<feature type="propeptide" id="PRO_0000004082" description="Removed in mature form by an endoprotease">
    <location>
        <begin position="107"/>
        <end position="115"/>
    </location>
</feature>
<feature type="modified residue" description="Phenylalanine amide" evidence="3">
    <location>
        <position position="106"/>
    </location>
</feature>
<feature type="disulfide bond">
    <location>
        <begin position="71"/>
        <end position="76"/>
    </location>
</feature>
<keyword id="KW-0027">Amidation</keyword>
<keyword id="KW-0165">Cleavage on pair of basic residues</keyword>
<keyword id="KW-0903">Direct protein sequencing</keyword>
<keyword id="KW-1015">Disulfide bond</keyword>
<keyword id="KW-0372">Hormone</keyword>
<keyword id="KW-0964">Secreted</keyword>
<keyword id="KW-0732">Signal</keyword>
<dbReference type="EMBL" id="Y18495">
    <property type="protein sequence ID" value="CAB76385.1"/>
    <property type="molecule type" value="mRNA"/>
</dbReference>
<dbReference type="SMR" id="P81564"/>
<dbReference type="GO" id="GO:0005615">
    <property type="term" value="C:extracellular space"/>
    <property type="evidence" value="ECO:0007669"/>
    <property type="project" value="TreeGrafter"/>
</dbReference>
<dbReference type="GO" id="GO:0031716">
    <property type="term" value="F:calcitonin receptor binding"/>
    <property type="evidence" value="ECO:0007669"/>
    <property type="project" value="TreeGrafter"/>
</dbReference>
<dbReference type="GO" id="GO:0005179">
    <property type="term" value="F:hormone activity"/>
    <property type="evidence" value="ECO:0007669"/>
    <property type="project" value="UniProtKB-KW"/>
</dbReference>
<dbReference type="GO" id="GO:0007189">
    <property type="term" value="P:adenylate cyclase-activating G protein-coupled receptor signaling pathway"/>
    <property type="evidence" value="ECO:0007669"/>
    <property type="project" value="TreeGrafter"/>
</dbReference>
<dbReference type="GO" id="GO:0051480">
    <property type="term" value="P:regulation of cytosolic calcium ion concentration"/>
    <property type="evidence" value="ECO:0007669"/>
    <property type="project" value="TreeGrafter"/>
</dbReference>
<dbReference type="Gene3D" id="6.10.250.2190">
    <property type="match status" value="1"/>
</dbReference>
<dbReference type="InterPro" id="IPR021117">
    <property type="entry name" value="Calcitonin-like"/>
</dbReference>
<dbReference type="InterPro" id="IPR021116">
    <property type="entry name" value="Calcitonin/adrenomedullin"/>
</dbReference>
<dbReference type="InterPro" id="IPR018360">
    <property type="entry name" value="Calcitonin_CS"/>
</dbReference>
<dbReference type="InterPro" id="IPR001693">
    <property type="entry name" value="Calcitonin_peptide-like"/>
</dbReference>
<dbReference type="InterPro" id="IPR000443">
    <property type="entry name" value="IAPP"/>
</dbReference>
<dbReference type="PANTHER" id="PTHR10505:SF16">
    <property type="entry name" value="CALCITONIN"/>
    <property type="match status" value="1"/>
</dbReference>
<dbReference type="PANTHER" id="PTHR10505">
    <property type="entry name" value="CALCITONIN-RELATED"/>
    <property type="match status" value="1"/>
</dbReference>
<dbReference type="Pfam" id="PF00214">
    <property type="entry name" value="Calc_CGRP_IAPP"/>
    <property type="match status" value="1"/>
</dbReference>
<dbReference type="PRINTS" id="PR00818">
    <property type="entry name" value="ISLETAMYLOID"/>
</dbReference>
<dbReference type="SMART" id="SM00113">
    <property type="entry name" value="CALCITONIN"/>
    <property type="match status" value="1"/>
</dbReference>
<dbReference type="PROSITE" id="PS00258">
    <property type="entry name" value="CALCITONIN"/>
    <property type="match status" value="1"/>
</dbReference>
<comment type="function">
    <text evidence="1">CGRP induces vasodilation. It dilates a variety of vessels including the coronary, cerebral and systemic vasculature. Its abundance in the CNS also points toward a neurotransmitter or neuromodulator role (By similarity).</text>
</comment>
<comment type="subcellular location">
    <subcellularLocation>
        <location>Secreted</location>
    </subcellularLocation>
</comment>
<comment type="tissue specificity">
    <text>Skin, intestine and brain.</text>
</comment>
<comment type="mass spectrometry" mass="3806.77" method="MALDI" evidence="3"/>
<comment type="similarity">
    <text evidence="4">Belongs to the calcitonin family.</text>
</comment>
<sequence length="115" mass="12438">MVLLKISSLLAVLGLLVCQMYSSQAAPARRALEPLPDRVTEAHRLLRALIRELTAEDMEASSSGAAHKRSCDTSTCATQRLADFLSRSGGIGSPDFVPTDVSANSFGRRRRSLHV</sequence>
<reference key="1">
    <citation type="journal article" date="2000" name="J. Biol. Chem.">
        <title>Isolation, structure, synthesis, and activity of a new member of the calcitonin gene-related peptide family from frog skin and molecular cloning of its precursor.</title>
        <authorList>
            <person name="Seon A.A."/>
            <person name="Pierre T.N."/>
            <person name="Redeker V."/>
            <person name="Lacombe C."/>
            <person name="Delfour A."/>
            <person name="Nicolas P."/>
            <person name="Amiche M."/>
        </authorList>
    </citation>
    <scope>NUCLEOTIDE SEQUENCE [MRNA]</scope>
    <scope>PROTEIN SEQUENCE OF 70-106</scope>
    <scope>AMIDATION AT PHE-106</scope>
    <scope>CHARACTERIZATION</scope>
    <scope>MASS SPECTROMETRY</scope>
    <source>
        <tissue>Skin</tissue>
    </source>
</reference>
<accession>P81564</accession>
<protein>
    <recommendedName>
        <fullName>Skin calcitonin gene-related peptide</fullName>
        <shortName>S-CGRP</shortName>
    </recommendedName>
</protein>
<evidence type="ECO:0000250" key="1"/>
<evidence type="ECO:0000255" key="2"/>
<evidence type="ECO:0000269" key="3">
    <source>
    </source>
</evidence>
<evidence type="ECO:0000305" key="4"/>
<proteinExistence type="evidence at protein level"/>
<name>CALCB_PHYBI</name>